<organism>
    <name type="scientific">Verminephrobacter eiseniae (strain EF01-2)</name>
    <dbReference type="NCBI Taxonomy" id="391735"/>
    <lineage>
        <taxon>Bacteria</taxon>
        <taxon>Pseudomonadati</taxon>
        <taxon>Pseudomonadota</taxon>
        <taxon>Betaproteobacteria</taxon>
        <taxon>Burkholderiales</taxon>
        <taxon>Comamonadaceae</taxon>
        <taxon>Verminephrobacter</taxon>
    </lineage>
</organism>
<feature type="chain" id="PRO_1000066488" description="Orotidine 5'-phosphate decarboxylase">
    <location>
        <begin position="1"/>
        <end position="274"/>
    </location>
</feature>
<feature type="active site" description="Proton donor" evidence="1">
    <location>
        <position position="95"/>
    </location>
</feature>
<comment type="catalytic activity">
    <reaction evidence="1">
        <text>orotidine 5'-phosphate + H(+) = UMP + CO2</text>
        <dbReference type="Rhea" id="RHEA:11596"/>
        <dbReference type="ChEBI" id="CHEBI:15378"/>
        <dbReference type="ChEBI" id="CHEBI:16526"/>
        <dbReference type="ChEBI" id="CHEBI:57538"/>
        <dbReference type="ChEBI" id="CHEBI:57865"/>
        <dbReference type="EC" id="4.1.1.23"/>
    </reaction>
</comment>
<comment type="pathway">
    <text evidence="1">Pyrimidine metabolism; UMP biosynthesis via de novo pathway; UMP from orotate: step 2/2.</text>
</comment>
<comment type="similarity">
    <text evidence="1">Belongs to the OMP decarboxylase family. Type 2 subfamily.</text>
</comment>
<protein>
    <recommendedName>
        <fullName evidence="1">Orotidine 5'-phosphate decarboxylase</fullName>
        <ecNumber evidence="1">4.1.1.23</ecNumber>
    </recommendedName>
    <alternativeName>
        <fullName evidence="1">OMP decarboxylase</fullName>
        <shortName evidence="1">OMPDCase</shortName>
        <shortName evidence="1">OMPdecase</shortName>
    </alternativeName>
</protein>
<proteinExistence type="inferred from homology"/>
<gene>
    <name evidence="1" type="primary">pyrF</name>
    <name type="ordered locus">Veis_1075</name>
</gene>
<dbReference type="EC" id="4.1.1.23" evidence="1"/>
<dbReference type="EMBL" id="CP000542">
    <property type="protein sequence ID" value="ABM56851.1"/>
    <property type="molecule type" value="Genomic_DNA"/>
</dbReference>
<dbReference type="RefSeq" id="WP_011808862.1">
    <property type="nucleotide sequence ID" value="NC_008786.1"/>
</dbReference>
<dbReference type="SMR" id="A1WGU4"/>
<dbReference type="STRING" id="391735.Veis_1075"/>
<dbReference type="GeneID" id="76459748"/>
<dbReference type="KEGG" id="vei:Veis_1075"/>
<dbReference type="eggNOG" id="COG0284">
    <property type="taxonomic scope" value="Bacteria"/>
</dbReference>
<dbReference type="HOGENOM" id="CLU_060704_1_0_4"/>
<dbReference type="OrthoDB" id="9808470at2"/>
<dbReference type="UniPathway" id="UPA00070">
    <property type="reaction ID" value="UER00120"/>
</dbReference>
<dbReference type="Proteomes" id="UP000000374">
    <property type="component" value="Chromosome"/>
</dbReference>
<dbReference type="GO" id="GO:0004590">
    <property type="term" value="F:orotidine-5'-phosphate decarboxylase activity"/>
    <property type="evidence" value="ECO:0007669"/>
    <property type="project" value="UniProtKB-UniRule"/>
</dbReference>
<dbReference type="GO" id="GO:0006207">
    <property type="term" value="P:'de novo' pyrimidine nucleobase biosynthetic process"/>
    <property type="evidence" value="ECO:0007669"/>
    <property type="project" value="InterPro"/>
</dbReference>
<dbReference type="GO" id="GO:0044205">
    <property type="term" value="P:'de novo' UMP biosynthetic process"/>
    <property type="evidence" value="ECO:0007669"/>
    <property type="project" value="UniProtKB-UniRule"/>
</dbReference>
<dbReference type="CDD" id="cd04725">
    <property type="entry name" value="OMP_decarboxylase_like"/>
    <property type="match status" value="1"/>
</dbReference>
<dbReference type="Gene3D" id="3.20.20.70">
    <property type="entry name" value="Aldolase class I"/>
    <property type="match status" value="1"/>
</dbReference>
<dbReference type="HAMAP" id="MF_01215">
    <property type="entry name" value="OMPdecase_type2"/>
    <property type="match status" value="1"/>
</dbReference>
<dbReference type="InterPro" id="IPR013785">
    <property type="entry name" value="Aldolase_TIM"/>
</dbReference>
<dbReference type="InterPro" id="IPR018089">
    <property type="entry name" value="OMPdecase_AS"/>
</dbReference>
<dbReference type="InterPro" id="IPR011995">
    <property type="entry name" value="OMPdecase_type-2"/>
</dbReference>
<dbReference type="InterPro" id="IPR001754">
    <property type="entry name" value="OMPdeCOase_dom"/>
</dbReference>
<dbReference type="InterPro" id="IPR011060">
    <property type="entry name" value="RibuloseP-bd_barrel"/>
</dbReference>
<dbReference type="NCBIfam" id="TIGR02127">
    <property type="entry name" value="pyrF_sub2"/>
    <property type="match status" value="1"/>
</dbReference>
<dbReference type="PANTHER" id="PTHR43375">
    <property type="entry name" value="OROTIDINE 5'-PHOSPHATE DECARBOXYLASE"/>
    <property type="match status" value="1"/>
</dbReference>
<dbReference type="PANTHER" id="PTHR43375:SF1">
    <property type="entry name" value="OROTIDINE 5'-PHOSPHATE DECARBOXYLASE"/>
    <property type="match status" value="1"/>
</dbReference>
<dbReference type="Pfam" id="PF00215">
    <property type="entry name" value="OMPdecase"/>
    <property type="match status" value="1"/>
</dbReference>
<dbReference type="SMART" id="SM00934">
    <property type="entry name" value="OMPdecase"/>
    <property type="match status" value="1"/>
</dbReference>
<dbReference type="SUPFAM" id="SSF51366">
    <property type="entry name" value="Ribulose-phoshate binding barrel"/>
    <property type="match status" value="1"/>
</dbReference>
<dbReference type="PROSITE" id="PS00156">
    <property type="entry name" value="OMPDECASE"/>
    <property type="match status" value="1"/>
</dbReference>
<keyword id="KW-0210">Decarboxylase</keyword>
<keyword id="KW-0456">Lyase</keyword>
<keyword id="KW-0665">Pyrimidine biosynthesis</keyword>
<keyword id="KW-1185">Reference proteome</keyword>
<evidence type="ECO:0000255" key="1">
    <source>
        <dbReference type="HAMAP-Rule" id="MF_01215"/>
    </source>
</evidence>
<reference key="1">
    <citation type="submission" date="2006-12" db="EMBL/GenBank/DDBJ databases">
        <title>Complete sequence of chromosome 1 of Verminephrobacter eiseniae EF01-2.</title>
        <authorList>
            <person name="Copeland A."/>
            <person name="Lucas S."/>
            <person name="Lapidus A."/>
            <person name="Barry K."/>
            <person name="Detter J.C."/>
            <person name="Glavina del Rio T."/>
            <person name="Dalin E."/>
            <person name="Tice H."/>
            <person name="Pitluck S."/>
            <person name="Chertkov O."/>
            <person name="Brettin T."/>
            <person name="Bruce D."/>
            <person name="Han C."/>
            <person name="Tapia R."/>
            <person name="Gilna P."/>
            <person name="Schmutz J."/>
            <person name="Larimer F."/>
            <person name="Land M."/>
            <person name="Hauser L."/>
            <person name="Kyrpides N."/>
            <person name="Kim E."/>
            <person name="Stahl D."/>
            <person name="Richardson P."/>
        </authorList>
    </citation>
    <scope>NUCLEOTIDE SEQUENCE [LARGE SCALE GENOMIC DNA]</scope>
    <source>
        <strain>EF01-2</strain>
    </source>
</reference>
<accession>A1WGU4</accession>
<name>PYRF_VEREI</name>
<sequence>MNFTDMLRAATARHGSLLCVGLDPEPARFPAGMQGDARKIYDFCAAVVDATADLVCAFKPQIAYFAAHGAEAQLERLMQHMRSNAPQVPVILDAKRGDIGATAEQYAKEAFERYGADAVTLSPFMGFDSIAPYLAYRGKGAFLLCRTSNPGGDDLQNQRLASVAGQPLLYEHLASLAQGPWNRNGQLGLVVGATYPQEIERVRSLAPTLPLLIPGVGAQGGDAAAAVRAGLRSDAPIIVNSSRTILYAGAGADFAGAARAQALRMRALLQAARR</sequence>